<dbReference type="EC" id="2.3.1.16" evidence="1"/>
<dbReference type="EMBL" id="CP000514">
    <property type="protein sequence ID" value="ABM18237.1"/>
    <property type="molecule type" value="Genomic_DNA"/>
</dbReference>
<dbReference type="RefSeq" id="WP_011784654.1">
    <property type="nucleotide sequence ID" value="NC_008740.1"/>
</dbReference>
<dbReference type="SMR" id="A1TZR8"/>
<dbReference type="STRING" id="351348.Maqu_1145"/>
<dbReference type="GeneID" id="31821539"/>
<dbReference type="KEGG" id="maq:Maqu_1145"/>
<dbReference type="eggNOG" id="COG0183">
    <property type="taxonomic scope" value="Bacteria"/>
</dbReference>
<dbReference type="HOGENOM" id="CLU_031026_2_2_6"/>
<dbReference type="OrthoDB" id="8951704at2"/>
<dbReference type="UniPathway" id="UPA00659"/>
<dbReference type="Proteomes" id="UP000000998">
    <property type="component" value="Chromosome"/>
</dbReference>
<dbReference type="GO" id="GO:0005737">
    <property type="term" value="C:cytoplasm"/>
    <property type="evidence" value="ECO:0007669"/>
    <property type="project" value="UniProtKB-SubCell"/>
</dbReference>
<dbReference type="GO" id="GO:0003988">
    <property type="term" value="F:acetyl-CoA C-acyltransferase activity"/>
    <property type="evidence" value="ECO:0007669"/>
    <property type="project" value="UniProtKB-UniRule"/>
</dbReference>
<dbReference type="GO" id="GO:0006635">
    <property type="term" value="P:fatty acid beta-oxidation"/>
    <property type="evidence" value="ECO:0007669"/>
    <property type="project" value="UniProtKB-UniRule"/>
</dbReference>
<dbReference type="GO" id="GO:0010124">
    <property type="term" value="P:phenylacetate catabolic process"/>
    <property type="evidence" value="ECO:0007669"/>
    <property type="project" value="TreeGrafter"/>
</dbReference>
<dbReference type="CDD" id="cd00751">
    <property type="entry name" value="thiolase"/>
    <property type="match status" value="1"/>
</dbReference>
<dbReference type="FunFam" id="3.40.47.10:FF:000010">
    <property type="entry name" value="Acetyl-CoA acetyltransferase (Thiolase)"/>
    <property type="match status" value="1"/>
</dbReference>
<dbReference type="Gene3D" id="3.40.47.10">
    <property type="match status" value="2"/>
</dbReference>
<dbReference type="HAMAP" id="MF_01620">
    <property type="entry name" value="FadA"/>
    <property type="match status" value="1"/>
</dbReference>
<dbReference type="InterPro" id="IPR012805">
    <property type="entry name" value="FadA"/>
</dbReference>
<dbReference type="InterPro" id="IPR002155">
    <property type="entry name" value="Thiolase"/>
</dbReference>
<dbReference type="InterPro" id="IPR016039">
    <property type="entry name" value="Thiolase-like"/>
</dbReference>
<dbReference type="InterPro" id="IPR050215">
    <property type="entry name" value="Thiolase-like_sf_Thiolase"/>
</dbReference>
<dbReference type="InterPro" id="IPR020615">
    <property type="entry name" value="Thiolase_acyl_enz_int_AS"/>
</dbReference>
<dbReference type="InterPro" id="IPR020610">
    <property type="entry name" value="Thiolase_AS"/>
</dbReference>
<dbReference type="InterPro" id="IPR020617">
    <property type="entry name" value="Thiolase_C"/>
</dbReference>
<dbReference type="InterPro" id="IPR020613">
    <property type="entry name" value="Thiolase_CS"/>
</dbReference>
<dbReference type="InterPro" id="IPR020616">
    <property type="entry name" value="Thiolase_N"/>
</dbReference>
<dbReference type="NCBIfam" id="TIGR01930">
    <property type="entry name" value="AcCoA-C-Actrans"/>
    <property type="match status" value="1"/>
</dbReference>
<dbReference type="NCBIfam" id="TIGR02445">
    <property type="entry name" value="fadA"/>
    <property type="match status" value="1"/>
</dbReference>
<dbReference type="NCBIfam" id="NF006510">
    <property type="entry name" value="PRK08947.1"/>
    <property type="match status" value="1"/>
</dbReference>
<dbReference type="PANTHER" id="PTHR43853:SF11">
    <property type="entry name" value="3-KETOACYL-COA THIOLASE FADA"/>
    <property type="match status" value="1"/>
</dbReference>
<dbReference type="PANTHER" id="PTHR43853">
    <property type="entry name" value="3-KETOACYL-COA THIOLASE, PEROXISOMAL"/>
    <property type="match status" value="1"/>
</dbReference>
<dbReference type="Pfam" id="PF02803">
    <property type="entry name" value="Thiolase_C"/>
    <property type="match status" value="1"/>
</dbReference>
<dbReference type="Pfam" id="PF00108">
    <property type="entry name" value="Thiolase_N"/>
    <property type="match status" value="1"/>
</dbReference>
<dbReference type="PIRSF" id="PIRSF000429">
    <property type="entry name" value="Ac-CoA_Ac_transf"/>
    <property type="match status" value="1"/>
</dbReference>
<dbReference type="SUPFAM" id="SSF53901">
    <property type="entry name" value="Thiolase-like"/>
    <property type="match status" value="2"/>
</dbReference>
<dbReference type="PROSITE" id="PS00098">
    <property type="entry name" value="THIOLASE_1"/>
    <property type="match status" value="1"/>
</dbReference>
<dbReference type="PROSITE" id="PS00737">
    <property type="entry name" value="THIOLASE_2"/>
    <property type="match status" value="1"/>
</dbReference>
<dbReference type="PROSITE" id="PS00099">
    <property type="entry name" value="THIOLASE_3"/>
    <property type="match status" value="1"/>
</dbReference>
<sequence length="391" mass="41807">MSLNPRDVVVVDCVRTPMGRAKNGCFRNVRAETLSAALIEALFERNPKLDPKEVEDVIWGCVNQTKEQGFNVARQISLLTRIPHESAAQTVNRLCGSAMSAIHTAAQAIQTGNGDVFLVGGVEHMGHVPMTEGFDHNPAASKYSAKASNMMGLTAEMLAKMHGITREQQDEFGARSHRLAHEATQEGRFKNEIVPIEGHDENGFVKLIEEDETIRPETTAESLGQLRPAFDPKNGTVTAGTSSQLTDGASAMVLMSAERAEALGLTPIAKIRSMAVAGCDPAIMGYGPVPATKKALKRAGLKVEDIDFWELNEAFAGQSLPVLKDLKLLGVMEEKVNLNGGAIALGHPLGCSGARISTTLLNIMQAKGGKLGVSTMCIGLGQGIATVWERI</sequence>
<keyword id="KW-0012">Acyltransferase</keyword>
<keyword id="KW-0963">Cytoplasm</keyword>
<keyword id="KW-0276">Fatty acid metabolism</keyword>
<keyword id="KW-0442">Lipid degradation</keyword>
<keyword id="KW-0443">Lipid metabolism</keyword>
<keyword id="KW-0808">Transferase</keyword>
<protein>
    <recommendedName>
        <fullName evidence="1">3-ketoacyl-CoA thiolase</fullName>
        <ecNumber evidence="1">2.3.1.16</ecNumber>
    </recommendedName>
    <alternativeName>
        <fullName evidence="1">Acetyl-CoA acyltransferase</fullName>
    </alternativeName>
    <alternativeName>
        <fullName evidence="1">Beta-ketothiolase</fullName>
    </alternativeName>
    <alternativeName>
        <fullName evidence="1">Fatty acid oxidation complex subunit beta</fullName>
    </alternativeName>
</protein>
<accession>A1TZR8</accession>
<evidence type="ECO:0000255" key="1">
    <source>
        <dbReference type="HAMAP-Rule" id="MF_01620"/>
    </source>
</evidence>
<organism>
    <name type="scientific">Marinobacter nauticus (strain ATCC 700491 / DSM 11845 / VT8)</name>
    <name type="common">Marinobacter aquaeolei</name>
    <dbReference type="NCBI Taxonomy" id="351348"/>
    <lineage>
        <taxon>Bacteria</taxon>
        <taxon>Pseudomonadati</taxon>
        <taxon>Pseudomonadota</taxon>
        <taxon>Gammaproteobacteria</taxon>
        <taxon>Pseudomonadales</taxon>
        <taxon>Marinobacteraceae</taxon>
        <taxon>Marinobacter</taxon>
    </lineage>
</organism>
<gene>
    <name evidence="1" type="primary">fadA</name>
    <name type="ordered locus">Maqu_1145</name>
</gene>
<name>FADA_MARN8</name>
<reference key="1">
    <citation type="journal article" date="2011" name="Appl. Environ. Microbiol.">
        <title>Genomic potential of Marinobacter aquaeolei, a biogeochemical 'opportunitroph'.</title>
        <authorList>
            <person name="Singer E."/>
            <person name="Webb E.A."/>
            <person name="Nelson W.C."/>
            <person name="Heidelberg J.F."/>
            <person name="Ivanova N."/>
            <person name="Pati A."/>
            <person name="Edwards K.J."/>
        </authorList>
    </citation>
    <scope>NUCLEOTIDE SEQUENCE [LARGE SCALE GENOMIC DNA]</scope>
    <source>
        <strain>ATCC 700491 / DSM 11845 / VT8</strain>
    </source>
</reference>
<proteinExistence type="inferred from homology"/>
<feature type="chain" id="PRO_0000292892" description="3-ketoacyl-CoA thiolase">
    <location>
        <begin position="1"/>
        <end position="391"/>
    </location>
</feature>
<feature type="active site" description="Acyl-thioester intermediate" evidence="1">
    <location>
        <position position="95"/>
    </location>
</feature>
<feature type="active site" description="Proton acceptor" evidence="1">
    <location>
        <position position="347"/>
    </location>
</feature>
<feature type="active site" description="Proton acceptor" evidence="1">
    <location>
        <position position="377"/>
    </location>
</feature>
<comment type="function">
    <text evidence="1">Catalyzes the final step of fatty acid oxidation in which acetyl-CoA is released and the CoA ester of a fatty acid two carbons shorter is formed.</text>
</comment>
<comment type="catalytic activity">
    <reaction evidence="1">
        <text>an acyl-CoA + acetyl-CoA = a 3-oxoacyl-CoA + CoA</text>
        <dbReference type="Rhea" id="RHEA:21564"/>
        <dbReference type="ChEBI" id="CHEBI:57287"/>
        <dbReference type="ChEBI" id="CHEBI:57288"/>
        <dbReference type="ChEBI" id="CHEBI:58342"/>
        <dbReference type="ChEBI" id="CHEBI:90726"/>
        <dbReference type="EC" id="2.3.1.16"/>
    </reaction>
</comment>
<comment type="pathway">
    <text evidence="1">Lipid metabolism; fatty acid beta-oxidation.</text>
</comment>
<comment type="subunit">
    <text evidence="1">Heterotetramer of two alpha chains (FadB) and two beta chains (FadA).</text>
</comment>
<comment type="subcellular location">
    <subcellularLocation>
        <location evidence="1">Cytoplasm</location>
    </subcellularLocation>
</comment>
<comment type="similarity">
    <text evidence="1">Belongs to the thiolase-like superfamily. Thiolase family.</text>
</comment>